<organism>
    <name type="scientific">Batozonellus maculifrons</name>
    <name type="common">Solitary wasp</name>
    <dbReference type="NCBI Taxonomy" id="308766"/>
    <lineage>
        <taxon>Eukaryota</taxon>
        <taxon>Metazoa</taxon>
        <taxon>Ecdysozoa</taxon>
        <taxon>Arthropoda</taxon>
        <taxon>Hexapoda</taxon>
        <taxon>Insecta</taxon>
        <taxon>Pterygota</taxon>
        <taxon>Neoptera</taxon>
        <taxon>Endopterygota</taxon>
        <taxon>Hymenoptera</taxon>
        <taxon>Apocrita</taxon>
        <taxon>Aculeata</taxon>
        <taxon>Pompiloidea</taxon>
        <taxon>Pompilidae</taxon>
        <taxon>Pompilinae</taxon>
        <taxon>Batozonellus</taxon>
    </lineage>
</organism>
<sequence length="13" mass="1559">RIKIGLFDQLSRL</sequence>
<dbReference type="GO" id="GO:0005576">
    <property type="term" value="C:extracellular region"/>
    <property type="evidence" value="ECO:0007669"/>
    <property type="project" value="UniProtKB-SubCell"/>
</dbReference>
<dbReference type="GO" id="GO:0044231">
    <property type="term" value="C:host cell presynaptic membrane"/>
    <property type="evidence" value="ECO:0007669"/>
    <property type="project" value="UniProtKB-KW"/>
</dbReference>
<dbReference type="GO" id="GO:0017080">
    <property type="term" value="F:sodium channel regulator activity"/>
    <property type="evidence" value="ECO:0007669"/>
    <property type="project" value="UniProtKB-KW"/>
</dbReference>
<dbReference type="GO" id="GO:0090729">
    <property type="term" value="F:toxin activity"/>
    <property type="evidence" value="ECO:0007669"/>
    <property type="project" value="UniProtKB-KW"/>
</dbReference>
<accession>P69392</accession>
<name>PMTXB_BATMC</name>
<evidence type="ECO:0000250" key="1">
    <source>
        <dbReference type="UniProtKB" id="P69391"/>
    </source>
</evidence>
<evidence type="ECO:0000269" key="2">
    <source>
    </source>
</evidence>
<evidence type="ECO:0000269" key="3">
    <source>
    </source>
</evidence>
<evidence type="ECO:0000269" key="4">
    <source>
    </source>
</evidence>
<evidence type="ECO:0000269" key="5">
    <source>
    </source>
</evidence>
<evidence type="ECO:0000269" key="6">
    <source>
    </source>
</evidence>
<evidence type="ECO:0000303" key="7">
    <source>
    </source>
</evidence>
<evidence type="ECO:0000305" key="8"/>
<evidence type="ECO:0000305" key="9">
    <source>
    </source>
</evidence>
<evidence type="ECO:0000305" key="10">
    <source>
    </source>
</evidence>
<protein>
    <recommendedName>
        <fullName evidence="7">Beta-pompilidotoxin</fullName>
        <shortName evidence="7">Beta-PMTX</shortName>
    </recommendedName>
</protein>
<feature type="peptide" id="PRO_0000044537" description="Beta-pompilidotoxin">
    <location>
        <begin position="1"/>
        <end position="13"/>
    </location>
</feature>
<feature type="modified residue" description="Leucine amide" evidence="1 9 10">
    <location>
        <position position="13"/>
    </location>
</feature>
<feature type="mutagenesis site" description="Similar order of inhibition potency on different Nav isoforms; alone or when associated with R-3." evidence="5">
    <original>R</original>
    <variation>K</variation>
    <location>
        <position position="1"/>
    </location>
</feature>
<feature type="mutagenesis site" description="Similar order of inhibition potency on different Nav isoforms; alone or when associated with K-1." evidence="5">
    <original>K</original>
    <variation>R</variation>
    <location>
        <position position="3"/>
    </location>
</feature>
<keyword id="KW-0027">Amidation</keyword>
<keyword id="KW-0903">Direct protein sequencing</keyword>
<keyword id="KW-0872">Ion channel impairing toxin</keyword>
<keyword id="KW-0528">Neurotoxin</keyword>
<keyword id="KW-0638">Presynaptic neurotoxin</keyword>
<keyword id="KW-0964">Secreted</keyword>
<keyword id="KW-0800">Toxin</keyword>
<keyword id="KW-0738">Voltage-gated sodium channel impairing toxin</keyword>
<reference key="1">
    <citation type="journal article" date="1998" name="Biochem. Biophys. Res. Commun.">
        <title>Isolation and structure of pompilidotoxins, novel peptide neurotoxins in solitary wasp venoms.</title>
        <authorList>
            <person name="Konno K."/>
            <person name="Hisada M."/>
            <person name="Itagaki Y."/>
            <person name="Naoki H."/>
            <person name="Kawai N."/>
            <person name="Miwa A."/>
            <person name="Yasuhara T."/>
            <person name="Takayama H."/>
        </authorList>
    </citation>
    <scope>PROTEIN SEQUENCE</scope>
    <scope>MASS SPECTROMETRY</scope>
    <scope>SYNTHESIS</scope>
    <scope>SUBCELLULAR LOCATION</scope>
    <scope>AMIDATION AT LEU-13</scope>
    <source>
        <tissue>Venom</tissue>
    </source>
</reference>
<reference key="2">
    <citation type="journal article" date="2001" name="Neurosci. Res.">
        <title>Modulation of synaptic transmission in hippocampal CA1 neurons by a novel neurotoxin (beta-pompilidotoxin) derived from wasp venom.</title>
        <authorList>
            <person name="Yokota H."/>
            <person name="Tsubokawa H."/>
            <person name="Miyawaki T."/>
            <person name="Konno K."/>
            <person name="Nakayama H."/>
            <person name="Masuzawa T."/>
            <person name="Kawai N."/>
        </authorList>
    </citation>
    <scope>FUNCTION</scope>
    <source>
        <tissue>Venom</tissue>
    </source>
</reference>
<reference key="3">
    <citation type="journal article" date="2002" name="Neurosci. Lett.">
        <title>Differential effects of novel wasp toxin on rat hippocampal interneurons.</title>
        <authorList>
            <person name="Miyawaki T."/>
            <person name="Tsubokawa H."/>
            <person name="Yokota H."/>
            <person name="Oguro K."/>
            <person name="Konno K."/>
            <person name="Masuzawa T."/>
            <person name="Kawai N."/>
        </authorList>
    </citation>
    <scope>FUNCTION</scope>
    <source>
        <tissue>Venom</tissue>
    </source>
</reference>
<reference key="4">
    <citation type="journal article" date="2004" name="J. Neurosci.">
        <title>Production of resurgent current in Nav1.6-null Purkinje neurons by slowing sodium channel inactivation with beta-pompilidotoxin.</title>
        <authorList>
            <person name="Grieco T.M."/>
            <person name="Raman I.M."/>
        </authorList>
    </citation>
    <scope>FUNCTION</scope>
    <source>
        <tissue>Venom</tissue>
    </source>
</reference>
<reference key="5">
    <citation type="journal article" date="2010" name="FEBS J.">
        <title>Voltage-gated sodium channel isoform-specific effects of pompilidotoxins.</title>
        <authorList>
            <person name="Schiavon E."/>
            <person name="Stevens M."/>
            <person name="Zaharenko A.J."/>
            <person name="Konno K."/>
            <person name="Tytgat J."/>
            <person name="Wanke E."/>
        </authorList>
    </citation>
    <scope>FUNCTION</scope>
    <scope>SYNTHESIS</scope>
    <scope>MUTAGENESIS OF ARG-1 AND LYS-3</scope>
</reference>
<reference key="6">
    <citation type="journal article" date="2016" name="Toxins">
        <title>Peptide toxins in solitary wasp venoms.</title>
        <authorList>
            <person name="Konno K."/>
            <person name="Kazuma K."/>
            <person name="Nihei K."/>
        </authorList>
    </citation>
    <scope>REVIEW</scope>
</reference>
<proteinExistence type="evidence at protein level"/>
<comment type="function">
    <text evidence="2 3 4 5">Inhibits sodium channel (Nav) inactivation. Shows two types of inhibitory activities on channels. Inhibition of insect DmNav1/para and hNav1.6/SCN8A shows a large increase in the steady-state current component without any increase in the slow component, whereas inhibition of hNav1.1/SCN1A, hNav1.2/SCN2A, hNav1.3/SCN3A and hNav1.7/SCN9A shows a large increase in the slow component with only a small steady-state component (PubMed:20059541). Is 5-fold more potent than alpha-PMTX for inducing repetitive action potentials in lobster neuromuscular junctions.</text>
</comment>
<comment type="subcellular location">
    <subcellularLocation>
        <location evidence="6">Secreted</location>
    </subcellularLocation>
</comment>
<comment type="tissue specificity">
    <text evidence="8">Expressed by the venom gland.</text>
</comment>
<comment type="mass spectrometry" mass="1530.0" method="MALDI" evidence="6"/>
<comment type="miscellaneous">
    <text evidence="5">Does not inactivate (neither slow nor steady-state components) hNav1.4/SCN4A and hNav1.5/SCN5A sodium channels, although some very small inhibitory effects are seen for the hNav1.5/SCN5A isoform.</text>
</comment>